<sequence>MKAVVLAVAVLFLTGSQARHFWQRDDPQTSWDRVRDFATVYVDAVKESGRDYVAQLEASLGKHLNLKLLDNWDTLSTTFSKLRSELGPVTQEFWDNLEKDTEWLRQEMNKDLVEVKEKVQPYLKNFQEKVQLELEHYRKKVEPLGTDLRDGARQKLQELQEKLTPLGEDLRDRARQHVDELRAQLGPYSDQMRQRLTQRLEALKDSASLAEYQAKAQEHLKTFSEKAKPALEDLRLGLLPVLESLKASFLSSIDEVSKKLSAQ</sequence>
<keyword id="KW-0153">Cholesterol metabolism</keyword>
<keyword id="KW-0325">Glycoprotein</keyword>
<keyword id="KW-0345">HDL</keyword>
<keyword id="KW-0443">Lipid metabolism</keyword>
<keyword id="KW-0445">Lipid transport</keyword>
<keyword id="KW-0449">Lipoprotein</keyword>
<keyword id="KW-0558">Oxidation</keyword>
<keyword id="KW-0564">Palmitate</keyword>
<keyword id="KW-0597">Phosphoprotein</keyword>
<keyword id="KW-1185">Reference proteome</keyword>
<keyword id="KW-0677">Repeat</keyword>
<keyword id="KW-0964">Secreted</keyword>
<keyword id="KW-0732">Signal</keyword>
<keyword id="KW-0753">Steroid metabolism</keyword>
<keyword id="KW-1207">Sterol metabolism</keyword>
<keyword id="KW-0813">Transport</keyword>
<evidence type="ECO:0000250" key="1"/>
<evidence type="ECO:0000250" key="2">
    <source>
        <dbReference type="UniProtKB" id="G5BQH5"/>
    </source>
</evidence>
<evidence type="ECO:0000250" key="3">
    <source>
        <dbReference type="UniProtKB" id="P02647"/>
    </source>
</evidence>
<evidence type="ECO:0000250" key="4">
    <source>
        <dbReference type="UniProtKB" id="P02648"/>
    </source>
</evidence>
<evidence type="ECO:0000250" key="5">
    <source>
        <dbReference type="UniProtKB" id="P04639"/>
    </source>
</evidence>
<evidence type="ECO:0000255" key="6"/>
<evidence type="ECO:0000305" key="7"/>
<gene>
    <name type="primary">APOA1</name>
</gene>
<feature type="signal peptide" evidence="6">
    <location>
        <begin position="1"/>
        <end position="18"/>
    </location>
</feature>
<feature type="chain" id="PRO_0000432013" description="Proapolipoprotein A-I">
    <location>
        <begin position="19"/>
        <end position="263"/>
    </location>
</feature>
<feature type="chain" id="PRO_0000432014" description="Apolipoprotein A-I">
    <location>
        <begin position="25"/>
        <end position="263"/>
    </location>
</feature>
<feature type="chain" id="PRO_0000432015" description="Truncated apolipoprotein A-I" evidence="3">
    <location>
        <begin position="25"/>
        <end position="262"/>
    </location>
</feature>
<feature type="repeat" description="1">
    <location>
        <begin position="66"/>
        <end position="87"/>
    </location>
</feature>
<feature type="repeat" description="2">
    <location>
        <begin position="88"/>
        <end position="109"/>
    </location>
</feature>
<feature type="repeat" description="3; half-length">
    <location>
        <begin position="110"/>
        <end position="120"/>
    </location>
</feature>
<feature type="repeat" description="4">
    <location>
        <begin position="121"/>
        <end position="142"/>
    </location>
</feature>
<feature type="repeat" description="5">
    <location>
        <begin position="143"/>
        <end position="164"/>
    </location>
</feature>
<feature type="repeat" description="6">
    <location>
        <begin position="165"/>
        <end position="186"/>
    </location>
</feature>
<feature type="repeat" description="7">
    <location>
        <begin position="187"/>
        <end position="206"/>
    </location>
</feature>
<feature type="repeat" description="8">
    <location>
        <begin position="207"/>
        <end position="228"/>
    </location>
</feature>
<feature type="repeat" description="9; half-length">
    <location>
        <begin position="229"/>
        <end position="239"/>
    </location>
</feature>
<feature type="repeat" description="10">
    <location>
        <begin position="240"/>
        <end position="263"/>
    </location>
</feature>
<feature type="region of interest" description="10 X approximate tandem repeats">
    <location>
        <begin position="66"/>
        <end position="263"/>
    </location>
</feature>
<feature type="modified residue" description="Methionine sulfoxide" evidence="3">
    <location>
        <position position="108"/>
    </location>
</feature>
<comment type="function">
    <text evidence="3">Participates in the reverse transport of cholesterol from tissues to the liver for excretion by promoting cholesterol efflux from tissues and by acting as a cofactor for the lecithin cholesterol acyltransferase (LCAT). As part of the SPAP complex, activates spermatozoa motility.</text>
</comment>
<comment type="subunit">
    <text evidence="2 3 5">Homodimer (By similarity). Interacts with APOA1BP and CLU. Component of a sperm activating protein complex (SPAP), consisting of APOA1, an immunoglobulin heavy chain, an immunoglobulin light chain and albumin. Interacts with NDRG1. Interacts with SCGB3A2 (By similarity). Interacts with NAXE and YJEFN3 (By similarity).</text>
</comment>
<comment type="subcellular location">
    <subcellularLocation>
        <location evidence="3">Secreted</location>
    </subcellularLocation>
</comment>
<comment type="PTM">
    <text evidence="4">Glycosylated.</text>
</comment>
<comment type="PTM">
    <text evidence="4">Palmitoylated.</text>
</comment>
<comment type="PTM">
    <text evidence="1">Phosphorylation sites are present in the extracellular medium.</text>
</comment>
<comment type="similarity">
    <text evidence="7">Belongs to the apolipoprotein A1/A4/E family.</text>
</comment>
<name>APOA1_OCTDE</name>
<accession>P0DMS5</accession>
<organism>
    <name type="scientific">Octodon degus</name>
    <name type="common">Degu</name>
    <name type="synonym">Sciurus degus</name>
    <dbReference type="NCBI Taxonomy" id="10160"/>
    <lineage>
        <taxon>Eukaryota</taxon>
        <taxon>Metazoa</taxon>
        <taxon>Chordata</taxon>
        <taxon>Craniata</taxon>
        <taxon>Vertebrata</taxon>
        <taxon>Euteleostomi</taxon>
        <taxon>Mammalia</taxon>
        <taxon>Eutheria</taxon>
        <taxon>Euarchontoglires</taxon>
        <taxon>Glires</taxon>
        <taxon>Rodentia</taxon>
        <taxon>Hystricomorpha</taxon>
        <taxon>Octodontidae</taxon>
        <taxon>Octodon</taxon>
    </lineage>
</organism>
<protein>
    <recommendedName>
        <fullName>Apolipoprotein A-I</fullName>
        <shortName>Apo-AI</shortName>
        <shortName>ApoA-I</shortName>
    </recommendedName>
    <alternativeName>
        <fullName>Apolipoprotein A1</fullName>
    </alternativeName>
    <component>
        <recommendedName>
            <fullName>Proapolipoprotein A-I</fullName>
            <shortName>ProapoA-I</shortName>
        </recommendedName>
    </component>
    <component>
        <recommendedName>
            <fullName>Truncated apolipoprotein A-I</fullName>
        </recommendedName>
    </component>
</protein>
<proteinExistence type="inferred from homology"/>
<reference key="1">
    <citation type="submission" date="2012-04" db="EMBL/GenBank/DDBJ databases">
        <authorList>
            <person name="Di Palma F."/>
            <person name="Alfoldi J."/>
            <person name="Johnson J."/>
            <person name="Berlin A."/>
            <person name="Gnerre S."/>
            <person name="Jaffe D."/>
            <person name="MacCallum I."/>
            <person name="Young S."/>
            <person name="Walker B.J."/>
            <person name="Lindblad-Toh K."/>
        </authorList>
    </citation>
    <scope>NUCLEOTIDE SEQUENCE [LARGE SCALE GENOMIC DNA]</scope>
</reference>
<reference key="2">
    <citation type="unpublished observations" date="2014-12">
        <authorList>
            <person name="Puppione D.L."/>
        </authorList>
    </citation>
    <scope>IDENTIFICATION</scope>
</reference>
<dbReference type="EMBL" id="AJSA01122103">
    <property type="status" value="NOT_ANNOTATED_CDS"/>
    <property type="molecule type" value="Genomic_DNA"/>
</dbReference>
<dbReference type="RefSeq" id="XP_004636538.1">
    <property type="nucleotide sequence ID" value="XM_004636481.1"/>
</dbReference>
<dbReference type="SMR" id="P0DMS5"/>
<dbReference type="Ensembl" id="ENSODET00000012307">
    <property type="protein sequence ID" value="ENSODEP00000012142"/>
    <property type="gene ID" value="ENSODEG00000009009"/>
</dbReference>
<dbReference type="InParanoid" id="P0DMS5"/>
<dbReference type="OMA" id="EYVAQFE"/>
<dbReference type="Proteomes" id="UP000515203">
    <property type="component" value="Unplaced"/>
</dbReference>
<dbReference type="GO" id="GO:0042627">
    <property type="term" value="C:chylomicron"/>
    <property type="evidence" value="ECO:0007669"/>
    <property type="project" value="TreeGrafter"/>
</dbReference>
<dbReference type="GO" id="GO:0030139">
    <property type="term" value="C:endocytic vesicle"/>
    <property type="evidence" value="ECO:0007669"/>
    <property type="project" value="Ensembl"/>
</dbReference>
<dbReference type="GO" id="GO:1903561">
    <property type="term" value="C:extracellular vesicle"/>
    <property type="evidence" value="ECO:0007669"/>
    <property type="project" value="TreeGrafter"/>
</dbReference>
<dbReference type="GO" id="GO:0034362">
    <property type="term" value="C:low-density lipoprotein particle"/>
    <property type="evidence" value="ECO:0007669"/>
    <property type="project" value="TreeGrafter"/>
</dbReference>
<dbReference type="GO" id="GO:0034366">
    <property type="term" value="C:spherical high-density lipoprotein particle"/>
    <property type="evidence" value="ECO:0007669"/>
    <property type="project" value="Ensembl"/>
</dbReference>
<dbReference type="GO" id="GO:0034361">
    <property type="term" value="C:very-low-density lipoprotein particle"/>
    <property type="evidence" value="ECO:0007669"/>
    <property type="project" value="Ensembl"/>
</dbReference>
<dbReference type="GO" id="GO:0001540">
    <property type="term" value="F:amyloid-beta binding"/>
    <property type="evidence" value="ECO:0007669"/>
    <property type="project" value="Ensembl"/>
</dbReference>
<dbReference type="GO" id="GO:0034191">
    <property type="term" value="F:apolipoprotein A-I receptor binding"/>
    <property type="evidence" value="ECO:0007669"/>
    <property type="project" value="Ensembl"/>
</dbReference>
<dbReference type="GO" id="GO:0045499">
    <property type="term" value="F:chemorepellent activity"/>
    <property type="evidence" value="ECO:0007669"/>
    <property type="project" value="Ensembl"/>
</dbReference>
<dbReference type="GO" id="GO:0015485">
    <property type="term" value="F:cholesterol binding"/>
    <property type="evidence" value="ECO:0007669"/>
    <property type="project" value="Ensembl"/>
</dbReference>
<dbReference type="GO" id="GO:0120020">
    <property type="term" value="F:cholesterol transfer activity"/>
    <property type="evidence" value="ECO:0007669"/>
    <property type="project" value="Ensembl"/>
</dbReference>
<dbReference type="GO" id="GO:0019899">
    <property type="term" value="F:enzyme binding"/>
    <property type="evidence" value="ECO:0007669"/>
    <property type="project" value="Ensembl"/>
</dbReference>
<dbReference type="GO" id="GO:0031072">
    <property type="term" value="F:heat shock protein binding"/>
    <property type="evidence" value="ECO:0007669"/>
    <property type="project" value="Ensembl"/>
</dbReference>
<dbReference type="GO" id="GO:0008035">
    <property type="term" value="F:high-density lipoprotein particle binding"/>
    <property type="evidence" value="ECO:0007669"/>
    <property type="project" value="Ensembl"/>
</dbReference>
<dbReference type="GO" id="GO:0070653">
    <property type="term" value="F:high-density lipoprotein particle receptor binding"/>
    <property type="evidence" value="ECO:0007669"/>
    <property type="project" value="Ensembl"/>
</dbReference>
<dbReference type="GO" id="GO:0060228">
    <property type="term" value="F:phosphatidylcholine-sterol O-acyltransferase activator activity"/>
    <property type="evidence" value="ECO:0007669"/>
    <property type="project" value="Ensembl"/>
</dbReference>
<dbReference type="GO" id="GO:0005543">
    <property type="term" value="F:phospholipid binding"/>
    <property type="evidence" value="ECO:0007669"/>
    <property type="project" value="Ensembl"/>
</dbReference>
<dbReference type="GO" id="GO:0042803">
    <property type="term" value="F:protein homodimerization activity"/>
    <property type="evidence" value="ECO:0000250"/>
    <property type="project" value="UniProtKB"/>
</dbReference>
<dbReference type="GO" id="GO:0030325">
    <property type="term" value="P:adrenal gland development"/>
    <property type="evidence" value="ECO:0007669"/>
    <property type="project" value="Ensembl"/>
</dbReference>
<dbReference type="GO" id="GO:0034205">
    <property type="term" value="P:amyloid-beta formation"/>
    <property type="evidence" value="ECO:0007669"/>
    <property type="project" value="Ensembl"/>
</dbReference>
<dbReference type="GO" id="GO:0043534">
    <property type="term" value="P:blood vessel endothelial cell migration"/>
    <property type="evidence" value="ECO:0007669"/>
    <property type="project" value="Ensembl"/>
</dbReference>
<dbReference type="GO" id="GO:0071402">
    <property type="term" value="P:cellular response to lipoprotein particle stimulus"/>
    <property type="evidence" value="ECO:0007669"/>
    <property type="project" value="Ensembl"/>
</dbReference>
<dbReference type="GO" id="GO:0006695">
    <property type="term" value="P:cholesterol biosynthetic process"/>
    <property type="evidence" value="ECO:0007669"/>
    <property type="project" value="Ensembl"/>
</dbReference>
<dbReference type="GO" id="GO:0033344">
    <property type="term" value="P:cholesterol efflux"/>
    <property type="evidence" value="ECO:0007669"/>
    <property type="project" value="Ensembl"/>
</dbReference>
<dbReference type="GO" id="GO:0042632">
    <property type="term" value="P:cholesterol homeostasis"/>
    <property type="evidence" value="ECO:0007669"/>
    <property type="project" value="Ensembl"/>
</dbReference>
<dbReference type="GO" id="GO:0070508">
    <property type="term" value="P:cholesterol import"/>
    <property type="evidence" value="ECO:0007669"/>
    <property type="project" value="Ensembl"/>
</dbReference>
<dbReference type="GO" id="GO:0001935">
    <property type="term" value="P:endothelial cell proliferation"/>
    <property type="evidence" value="ECO:0007669"/>
    <property type="project" value="Ensembl"/>
</dbReference>
<dbReference type="GO" id="GO:0007186">
    <property type="term" value="P:G protein-coupled receptor signaling pathway"/>
    <property type="evidence" value="ECO:0007669"/>
    <property type="project" value="Ensembl"/>
</dbReference>
<dbReference type="GO" id="GO:0008211">
    <property type="term" value="P:glucocorticoid metabolic process"/>
    <property type="evidence" value="ECO:0007669"/>
    <property type="project" value="Ensembl"/>
</dbReference>
<dbReference type="GO" id="GO:0034380">
    <property type="term" value="P:high-density lipoprotein particle assembly"/>
    <property type="evidence" value="ECO:0007669"/>
    <property type="project" value="Ensembl"/>
</dbReference>
<dbReference type="GO" id="GO:0034375">
    <property type="term" value="P:high-density lipoprotein particle remodeling"/>
    <property type="evidence" value="ECO:0007669"/>
    <property type="project" value="Ensembl"/>
</dbReference>
<dbReference type="GO" id="GO:0007229">
    <property type="term" value="P:integrin-mediated signaling pathway"/>
    <property type="evidence" value="ECO:0007669"/>
    <property type="project" value="Ensembl"/>
</dbReference>
<dbReference type="GO" id="GO:0019915">
    <property type="term" value="P:lipid storage"/>
    <property type="evidence" value="ECO:0007669"/>
    <property type="project" value="Ensembl"/>
</dbReference>
<dbReference type="GO" id="GO:0042158">
    <property type="term" value="P:lipoprotein biosynthetic process"/>
    <property type="evidence" value="ECO:0007669"/>
    <property type="project" value="Ensembl"/>
</dbReference>
<dbReference type="GO" id="GO:0060354">
    <property type="term" value="P:negative regulation of cell adhesion molecule production"/>
    <property type="evidence" value="ECO:0007669"/>
    <property type="project" value="Ensembl"/>
</dbReference>
<dbReference type="GO" id="GO:0002719">
    <property type="term" value="P:negative regulation of cytokine production involved in immune response"/>
    <property type="evidence" value="ECO:0007669"/>
    <property type="project" value="Ensembl"/>
</dbReference>
<dbReference type="GO" id="GO:0034115">
    <property type="term" value="P:negative regulation of heterotypic cell-cell adhesion"/>
    <property type="evidence" value="ECO:0007669"/>
    <property type="project" value="Ensembl"/>
</dbReference>
<dbReference type="GO" id="GO:0050728">
    <property type="term" value="P:negative regulation of inflammatory response"/>
    <property type="evidence" value="ECO:0007669"/>
    <property type="project" value="Ensembl"/>
</dbReference>
<dbReference type="GO" id="GO:0032691">
    <property type="term" value="P:negative regulation of interleukin-1 beta production"/>
    <property type="evidence" value="ECO:0007669"/>
    <property type="project" value="Ensembl"/>
</dbReference>
<dbReference type="GO" id="GO:0010804">
    <property type="term" value="P:negative regulation of tumor necrosis factor-mediated signaling pathway"/>
    <property type="evidence" value="ECO:0007669"/>
    <property type="project" value="Ensembl"/>
</dbReference>
<dbReference type="GO" id="GO:0010903">
    <property type="term" value="P:negative regulation of very-low-density lipoprotein particle remodeling"/>
    <property type="evidence" value="ECO:0007669"/>
    <property type="project" value="Ensembl"/>
</dbReference>
<dbReference type="GO" id="GO:0006656">
    <property type="term" value="P:phosphatidylcholine biosynthetic process"/>
    <property type="evidence" value="ECO:0007669"/>
    <property type="project" value="Ensembl"/>
</dbReference>
<dbReference type="GO" id="GO:0033700">
    <property type="term" value="P:phospholipid efflux"/>
    <property type="evidence" value="ECO:0007669"/>
    <property type="project" value="Ensembl"/>
</dbReference>
<dbReference type="GO" id="GO:0055091">
    <property type="term" value="P:phospholipid homeostasis"/>
    <property type="evidence" value="ECO:0007669"/>
    <property type="project" value="Ensembl"/>
</dbReference>
<dbReference type="GO" id="GO:0010875">
    <property type="term" value="P:positive regulation of cholesterol efflux"/>
    <property type="evidence" value="ECO:0000250"/>
    <property type="project" value="UniProtKB"/>
</dbReference>
<dbReference type="GO" id="GO:0090205">
    <property type="term" value="P:positive regulation of cholesterol metabolic process"/>
    <property type="evidence" value="ECO:0007669"/>
    <property type="project" value="Ensembl"/>
</dbReference>
<dbReference type="GO" id="GO:0050766">
    <property type="term" value="P:positive regulation of phagocytosis"/>
    <property type="evidence" value="ECO:0000250"/>
    <property type="project" value="UniProtKB"/>
</dbReference>
<dbReference type="GO" id="GO:1902995">
    <property type="term" value="P:positive regulation of phospholipid efflux"/>
    <property type="evidence" value="ECO:0000250"/>
    <property type="project" value="UniProtKB"/>
</dbReference>
<dbReference type="GO" id="GO:0035025">
    <property type="term" value="P:positive regulation of Rho protein signal transduction"/>
    <property type="evidence" value="ECO:0007669"/>
    <property type="project" value="Ensembl"/>
</dbReference>
<dbReference type="GO" id="GO:0051496">
    <property type="term" value="P:positive regulation of stress fiber assembly"/>
    <property type="evidence" value="ECO:0007669"/>
    <property type="project" value="Ensembl"/>
</dbReference>
<dbReference type="GO" id="GO:1900026">
    <property type="term" value="P:positive regulation of substrate adhesion-dependent cell spreading"/>
    <property type="evidence" value="ECO:0007669"/>
    <property type="project" value="Ensembl"/>
</dbReference>
<dbReference type="GO" id="GO:0050821">
    <property type="term" value="P:protein stabilization"/>
    <property type="evidence" value="ECO:0000250"/>
    <property type="project" value="UniProtKB"/>
</dbReference>
<dbReference type="GO" id="GO:0032489">
    <property type="term" value="P:regulation of Cdc42 protein signal transduction"/>
    <property type="evidence" value="ECO:0007669"/>
    <property type="project" value="Ensembl"/>
</dbReference>
<dbReference type="GO" id="GO:0030300">
    <property type="term" value="P:regulation of intestinal cholesterol absorption"/>
    <property type="evidence" value="ECO:0007669"/>
    <property type="project" value="Ensembl"/>
</dbReference>
<dbReference type="GO" id="GO:0043691">
    <property type="term" value="P:reverse cholesterol transport"/>
    <property type="evidence" value="ECO:0007669"/>
    <property type="project" value="Ensembl"/>
</dbReference>
<dbReference type="GO" id="GO:0070328">
    <property type="term" value="P:triglyceride homeostasis"/>
    <property type="evidence" value="ECO:0007669"/>
    <property type="project" value="Ensembl"/>
</dbReference>
<dbReference type="GO" id="GO:0051180">
    <property type="term" value="P:vitamin transport"/>
    <property type="evidence" value="ECO:0007669"/>
    <property type="project" value="Ensembl"/>
</dbReference>
<dbReference type="FunFam" id="1.20.120.20:FF:000001">
    <property type="entry name" value="Apolipoprotein A-I"/>
    <property type="match status" value="1"/>
</dbReference>
<dbReference type="FunFam" id="1.20.5.20:FF:000001">
    <property type="entry name" value="apolipoprotein A-I"/>
    <property type="match status" value="1"/>
</dbReference>
<dbReference type="Gene3D" id="1.20.5.20">
    <property type="match status" value="1"/>
</dbReference>
<dbReference type="Gene3D" id="6.10.140.380">
    <property type="match status" value="1"/>
</dbReference>
<dbReference type="Gene3D" id="1.20.120.20">
    <property type="entry name" value="Apolipoprotein"/>
    <property type="match status" value="1"/>
</dbReference>
<dbReference type="InterPro" id="IPR000074">
    <property type="entry name" value="ApoA_E"/>
</dbReference>
<dbReference type="InterPro" id="IPR050163">
    <property type="entry name" value="Apolipoprotein_A1/A4/E"/>
</dbReference>
<dbReference type="PANTHER" id="PTHR18976">
    <property type="entry name" value="APOLIPOPROTEIN"/>
    <property type="match status" value="1"/>
</dbReference>
<dbReference type="PANTHER" id="PTHR18976:SF11">
    <property type="entry name" value="APOLIPOPROTEIN A-I"/>
    <property type="match status" value="1"/>
</dbReference>
<dbReference type="Pfam" id="PF01442">
    <property type="entry name" value="Apolipoprotein"/>
    <property type="match status" value="1"/>
</dbReference>
<dbReference type="SUPFAM" id="SSF58113">
    <property type="entry name" value="Apolipoprotein A-I"/>
    <property type="match status" value="1"/>
</dbReference>